<protein>
    <recommendedName>
        <fullName evidence="1">Large ribosomal subunit protein bL21</fullName>
    </recommendedName>
    <alternativeName>
        <fullName evidence="2">50S ribosomal protein L21</fullName>
    </alternativeName>
</protein>
<dbReference type="EMBL" id="CP000261">
    <property type="protein sequence ID" value="ABF35751.1"/>
    <property type="molecule type" value="Genomic_DNA"/>
</dbReference>
<dbReference type="SMR" id="Q1JCF7"/>
<dbReference type="KEGG" id="spj:MGAS2096_Spy0699"/>
<dbReference type="HOGENOM" id="CLU_061463_3_1_9"/>
<dbReference type="GO" id="GO:0005737">
    <property type="term" value="C:cytoplasm"/>
    <property type="evidence" value="ECO:0007669"/>
    <property type="project" value="UniProtKB-ARBA"/>
</dbReference>
<dbReference type="GO" id="GO:1990904">
    <property type="term" value="C:ribonucleoprotein complex"/>
    <property type="evidence" value="ECO:0007669"/>
    <property type="project" value="UniProtKB-KW"/>
</dbReference>
<dbReference type="GO" id="GO:0005840">
    <property type="term" value="C:ribosome"/>
    <property type="evidence" value="ECO:0007669"/>
    <property type="project" value="UniProtKB-KW"/>
</dbReference>
<dbReference type="GO" id="GO:0019843">
    <property type="term" value="F:rRNA binding"/>
    <property type="evidence" value="ECO:0007669"/>
    <property type="project" value="UniProtKB-UniRule"/>
</dbReference>
<dbReference type="GO" id="GO:0003735">
    <property type="term" value="F:structural constituent of ribosome"/>
    <property type="evidence" value="ECO:0007669"/>
    <property type="project" value="InterPro"/>
</dbReference>
<dbReference type="GO" id="GO:0006412">
    <property type="term" value="P:translation"/>
    <property type="evidence" value="ECO:0007669"/>
    <property type="project" value="UniProtKB-UniRule"/>
</dbReference>
<dbReference type="HAMAP" id="MF_01363">
    <property type="entry name" value="Ribosomal_bL21"/>
    <property type="match status" value="1"/>
</dbReference>
<dbReference type="InterPro" id="IPR028909">
    <property type="entry name" value="bL21-like"/>
</dbReference>
<dbReference type="InterPro" id="IPR036164">
    <property type="entry name" value="bL21-like_sf"/>
</dbReference>
<dbReference type="InterPro" id="IPR001787">
    <property type="entry name" value="Ribosomal_bL21"/>
</dbReference>
<dbReference type="InterPro" id="IPR018258">
    <property type="entry name" value="Ribosomal_bL21_CS"/>
</dbReference>
<dbReference type="NCBIfam" id="TIGR00061">
    <property type="entry name" value="L21"/>
    <property type="match status" value="1"/>
</dbReference>
<dbReference type="PANTHER" id="PTHR21349">
    <property type="entry name" value="50S RIBOSOMAL PROTEIN L21"/>
    <property type="match status" value="1"/>
</dbReference>
<dbReference type="PANTHER" id="PTHR21349:SF0">
    <property type="entry name" value="LARGE RIBOSOMAL SUBUNIT PROTEIN BL21M"/>
    <property type="match status" value="1"/>
</dbReference>
<dbReference type="Pfam" id="PF00829">
    <property type="entry name" value="Ribosomal_L21p"/>
    <property type="match status" value="1"/>
</dbReference>
<dbReference type="SUPFAM" id="SSF141091">
    <property type="entry name" value="L21p-like"/>
    <property type="match status" value="1"/>
</dbReference>
<dbReference type="PROSITE" id="PS01169">
    <property type="entry name" value="RIBOSOMAL_L21"/>
    <property type="match status" value="1"/>
</dbReference>
<proteinExistence type="inferred from homology"/>
<comment type="function">
    <text evidence="1">This protein binds to 23S rRNA in the presence of protein L20.</text>
</comment>
<comment type="subunit">
    <text evidence="1">Part of the 50S ribosomal subunit. Contacts protein L20.</text>
</comment>
<comment type="similarity">
    <text evidence="1">Belongs to the bacterial ribosomal protein bL21 family.</text>
</comment>
<organism>
    <name type="scientific">Streptococcus pyogenes serotype M12 (strain MGAS2096)</name>
    <dbReference type="NCBI Taxonomy" id="370553"/>
    <lineage>
        <taxon>Bacteria</taxon>
        <taxon>Bacillati</taxon>
        <taxon>Bacillota</taxon>
        <taxon>Bacilli</taxon>
        <taxon>Lactobacillales</taxon>
        <taxon>Streptococcaceae</taxon>
        <taxon>Streptococcus</taxon>
    </lineage>
</organism>
<gene>
    <name evidence="1" type="primary">rplU</name>
    <name type="ordered locus">MGAS2096_Spy0699</name>
</gene>
<reference key="1">
    <citation type="journal article" date="2006" name="Proc. Natl. Acad. Sci. U.S.A.">
        <title>Molecular genetic anatomy of inter- and intraserotype variation in the human bacterial pathogen group A Streptococcus.</title>
        <authorList>
            <person name="Beres S.B."/>
            <person name="Richter E.W."/>
            <person name="Nagiec M.J."/>
            <person name="Sumby P."/>
            <person name="Porcella S.F."/>
            <person name="DeLeo F.R."/>
            <person name="Musser J.M."/>
        </authorList>
    </citation>
    <scope>NUCLEOTIDE SEQUENCE [LARGE SCALE GENOMIC DNA]</scope>
    <source>
        <strain>MGAS2096</strain>
    </source>
</reference>
<name>RL21_STRPB</name>
<feature type="chain" id="PRO_0000269394" description="Large ribosomal subunit protein bL21">
    <location>
        <begin position="1"/>
        <end position="104"/>
    </location>
</feature>
<keyword id="KW-0687">Ribonucleoprotein</keyword>
<keyword id="KW-0689">Ribosomal protein</keyword>
<keyword id="KW-0694">RNA-binding</keyword>
<keyword id="KW-0699">rRNA-binding</keyword>
<accession>Q1JCF7</accession>
<sequence length="104" mass="11155">MSTYAIIKTGGKQVKVEVGQAIYVEKIDAEAGAEVTFNEVVLVGGDKTVVGTPVVEGATVVGTVEKQGKQKKVVTFKYKPKKGSHRKQGHRQPYTKVVINAINA</sequence>
<evidence type="ECO:0000255" key="1">
    <source>
        <dbReference type="HAMAP-Rule" id="MF_01363"/>
    </source>
</evidence>
<evidence type="ECO:0000305" key="2"/>